<sequence>MIKITKEANIARNVLLLKGLENPILKEYNDIKEKERELLIAEYLYKIMSLLNLDLKNESLKDTPIRISKMYVNEIFSGLDYKNFPKIMLMDNKIKFHEMIIVRDILLISTCEHHFITINGQATIAYIPENKIIGLSKINRIAQFFAKRPQIQERLTKQILLVLQVLLQTKNVAIIIHMDHFCVKARGVCDTSSSTVTSCLDGLFKSDKNIREEFFFKK</sequence>
<accession>Q8KA05</accession>
<dbReference type="EC" id="3.5.4.16" evidence="2"/>
<dbReference type="EMBL" id="AE013218">
    <property type="protein sequence ID" value="AAM67697.1"/>
    <property type="molecule type" value="Genomic_DNA"/>
</dbReference>
<dbReference type="RefSeq" id="WP_011053664.1">
    <property type="nucleotide sequence ID" value="NC_004061.1"/>
</dbReference>
<dbReference type="SMR" id="Q8KA05"/>
<dbReference type="STRING" id="198804.BUsg_129"/>
<dbReference type="GeneID" id="93003599"/>
<dbReference type="KEGG" id="bas:BUsg_129"/>
<dbReference type="eggNOG" id="COG0302">
    <property type="taxonomic scope" value="Bacteria"/>
</dbReference>
<dbReference type="HOGENOM" id="CLU_049768_3_2_6"/>
<dbReference type="UniPathway" id="UPA00848">
    <property type="reaction ID" value="UER00151"/>
</dbReference>
<dbReference type="Proteomes" id="UP000000416">
    <property type="component" value="Chromosome"/>
</dbReference>
<dbReference type="GO" id="GO:0005737">
    <property type="term" value="C:cytoplasm"/>
    <property type="evidence" value="ECO:0007669"/>
    <property type="project" value="TreeGrafter"/>
</dbReference>
<dbReference type="GO" id="GO:0005525">
    <property type="term" value="F:GTP binding"/>
    <property type="evidence" value="ECO:0007669"/>
    <property type="project" value="UniProtKB-KW"/>
</dbReference>
<dbReference type="GO" id="GO:0003934">
    <property type="term" value="F:GTP cyclohydrolase I activity"/>
    <property type="evidence" value="ECO:0007669"/>
    <property type="project" value="UniProtKB-UniRule"/>
</dbReference>
<dbReference type="GO" id="GO:0008270">
    <property type="term" value="F:zinc ion binding"/>
    <property type="evidence" value="ECO:0007669"/>
    <property type="project" value="UniProtKB-UniRule"/>
</dbReference>
<dbReference type="GO" id="GO:0006730">
    <property type="term" value="P:one-carbon metabolic process"/>
    <property type="evidence" value="ECO:0007669"/>
    <property type="project" value="UniProtKB-UniRule"/>
</dbReference>
<dbReference type="GO" id="GO:0006729">
    <property type="term" value="P:tetrahydrobiopterin biosynthetic process"/>
    <property type="evidence" value="ECO:0007669"/>
    <property type="project" value="TreeGrafter"/>
</dbReference>
<dbReference type="GO" id="GO:0046654">
    <property type="term" value="P:tetrahydrofolate biosynthetic process"/>
    <property type="evidence" value="ECO:0007669"/>
    <property type="project" value="UniProtKB-UniRule"/>
</dbReference>
<dbReference type="FunFam" id="3.30.1130.10:FF:000001">
    <property type="entry name" value="GTP cyclohydrolase 1"/>
    <property type="match status" value="1"/>
</dbReference>
<dbReference type="Gene3D" id="1.10.286.10">
    <property type="match status" value="1"/>
</dbReference>
<dbReference type="Gene3D" id="3.30.1130.10">
    <property type="match status" value="1"/>
</dbReference>
<dbReference type="HAMAP" id="MF_00223">
    <property type="entry name" value="FolE"/>
    <property type="match status" value="1"/>
</dbReference>
<dbReference type="InterPro" id="IPR043133">
    <property type="entry name" value="GTP-CH-I_C/QueF"/>
</dbReference>
<dbReference type="InterPro" id="IPR043134">
    <property type="entry name" value="GTP-CH-I_N"/>
</dbReference>
<dbReference type="InterPro" id="IPR001474">
    <property type="entry name" value="GTP_CycHdrlase_I"/>
</dbReference>
<dbReference type="InterPro" id="IPR018234">
    <property type="entry name" value="GTP_CycHdrlase_I_CS"/>
</dbReference>
<dbReference type="InterPro" id="IPR020602">
    <property type="entry name" value="GTP_CycHdrlase_I_dom"/>
</dbReference>
<dbReference type="NCBIfam" id="TIGR00063">
    <property type="entry name" value="folE"/>
    <property type="match status" value="1"/>
</dbReference>
<dbReference type="NCBIfam" id="NF006824">
    <property type="entry name" value="PRK09347.1-1"/>
    <property type="match status" value="1"/>
</dbReference>
<dbReference type="NCBIfam" id="NF006826">
    <property type="entry name" value="PRK09347.1-3"/>
    <property type="match status" value="1"/>
</dbReference>
<dbReference type="PANTHER" id="PTHR11109:SF7">
    <property type="entry name" value="GTP CYCLOHYDROLASE 1"/>
    <property type="match status" value="1"/>
</dbReference>
<dbReference type="PANTHER" id="PTHR11109">
    <property type="entry name" value="GTP CYCLOHYDROLASE I"/>
    <property type="match status" value="1"/>
</dbReference>
<dbReference type="Pfam" id="PF01227">
    <property type="entry name" value="GTP_cyclohydroI"/>
    <property type="match status" value="1"/>
</dbReference>
<dbReference type="SUPFAM" id="SSF55620">
    <property type="entry name" value="Tetrahydrobiopterin biosynthesis enzymes-like"/>
    <property type="match status" value="1"/>
</dbReference>
<dbReference type="PROSITE" id="PS00859">
    <property type="entry name" value="GTP_CYCLOHYDROL_1_1"/>
    <property type="match status" value="1"/>
</dbReference>
<dbReference type="PROSITE" id="PS00860">
    <property type="entry name" value="GTP_CYCLOHYDROL_1_2"/>
    <property type="match status" value="1"/>
</dbReference>
<protein>
    <recommendedName>
        <fullName evidence="2">GTP cyclohydrolase 1</fullName>
        <ecNumber evidence="2">3.5.4.16</ecNumber>
    </recommendedName>
    <alternativeName>
        <fullName evidence="2">GTP cyclohydrolase I</fullName>
        <shortName evidence="2">GTP-CH-I</shortName>
    </alternativeName>
</protein>
<organism>
    <name type="scientific">Buchnera aphidicola subsp. Schizaphis graminum (strain Sg)</name>
    <dbReference type="NCBI Taxonomy" id="198804"/>
    <lineage>
        <taxon>Bacteria</taxon>
        <taxon>Pseudomonadati</taxon>
        <taxon>Pseudomonadota</taxon>
        <taxon>Gammaproteobacteria</taxon>
        <taxon>Enterobacterales</taxon>
        <taxon>Erwiniaceae</taxon>
        <taxon>Buchnera</taxon>
    </lineage>
</organism>
<name>GCH1_BUCAP</name>
<feature type="chain" id="PRO_0000119392" description="GTP cyclohydrolase 1">
    <location>
        <begin position="1"/>
        <end position="218"/>
    </location>
</feature>
<feature type="binding site" evidence="2">
    <location>
        <position position="111"/>
    </location>
    <ligand>
        <name>Zn(2+)</name>
        <dbReference type="ChEBI" id="CHEBI:29105"/>
    </ligand>
</feature>
<feature type="binding site" evidence="2">
    <location>
        <position position="114"/>
    </location>
    <ligand>
        <name>Zn(2+)</name>
        <dbReference type="ChEBI" id="CHEBI:29105"/>
    </ligand>
</feature>
<feature type="binding site" evidence="2">
    <location>
        <position position="182"/>
    </location>
    <ligand>
        <name>Zn(2+)</name>
        <dbReference type="ChEBI" id="CHEBI:29105"/>
    </ligand>
</feature>
<gene>
    <name evidence="2" type="primary">folE</name>
    <name type="ordered locus">BUsg_129</name>
</gene>
<comment type="catalytic activity">
    <reaction evidence="2">
        <text>GTP + H2O = 7,8-dihydroneopterin 3'-triphosphate + formate + H(+)</text>
        <dbReference type="Rhea" id="RHEA:17473"/>
        <dbReference type="ChEBI" id="CHEBI:15377"/>
        <dbReference type="ChEBI" id="CHEBI:15378"/>
        <dbReference type="ChEBI" id="CHEBI:15740"/>
        <dbReference type="ChEBI" id="CHEBI:37565"/>
        <dbReference type="ChEBI" id="CHEBI:58462"/>
        <dbReference type="EC" id="3.5.4.16"/>
    </reaction>
</comment>
<comment type="pathway">
    <text evidence="2">Cofactor biosynthesis; 7,8-dihydroneopterin triphosphate biosynthesis; 7,8-dihydroneopterin triphosphate from GTP: step 1/1.</text>
</comment>
<comment type="subunit">
    <text evidence="1">Toroid-shaped homodecamer, composed of two pentamers of five dimers.</text>
</comment>
<comment type="similarity">
    <text evidence="2">Belongs to the GTP cyclohydrolase I family.</text>
</comment>
<keyword id="KW-0342">GTP-binding</keyword>
<keyword id="KW-0378">Hydrolase</keyword>
<keyword id="KW-0479">Metal-binding</keyword>
<keyword id="KW-0547">Nucleotide-binding</keyword>
<keyword id="KW-0554">One-carbon metabolism</keyword>
<keyword id="KW-0862">Zinc</keyword>
<evidence type="ECO:0000250" key="1"/>
<evidence type="ECO:0000255" key="2">
    <source>
        <dbReference type="HAMAP-Rule" id="MF_00223"/>
    </source>
</evidence>
<reference key="1">
    <citation type="journal article" date="2002" name="Science">
        <title>50 million years of genomic stasis in endosymbiotic bacteria.</title>
        <authorList>
            <person name="Tamas I."/>
            <person name="Klasson L."/>
            <person name="Canbaeck B."/>
            <person name="Naeslund A.K."/>
            <person name="Eriksson A.-S."/>
            <person name="Wernegreen J.J."/>
            <person name="Sandstroem J.P."/>
            <person name="Moran N.A."/>
            <person name="Andersson S.G.E."/>
        </authorList>
    </citation>
    <scope>NUCLEOTIDE SEQUENCE [LARGE SCALE GENOMIC DNA]</scope>
    <source>
        <strain>Sg</strain>
    </source>
</reference>
<proteinExistence type="inferred from homology"/>